<comment type="function">
    <text evidence="1">Binds together with bS18 to 16S ribosomal RNA.</text>
</comment>
<comment type="similarity">
    <text evidence="1">Belongs to the bacterial ribosomal protein bS6 family.</text>
</comment>
<reference key="1">
    <citation type="submission" date="2006-03" db="EMBL/GenBank/DDBJ databases">
        <title>Complete genome sequence of Francisella tularensis LVS (Live Vaccine Strain).</title>
        <authorList>
            <person name="Chain P."/>
            <person name="Larimer F."/>
            <person name="Land M."/>
            <person name="Stilwagen S."/>
            <person name="Larsson P."/>
            <person name="Bearden S."/>
            <person name="Chu M."/>
            <person name="Oyston P."/>
            <person name="Forsman M."/>
            <person name="Andersson S."/>
            <person name="Lindler L."/>
            <person name="Titball R."/>
            <person name="Garcia E."/>
        </authorList>
    </citation>
    <scope>NUCLEOTIDE SEQUENCE [LARGE SCALE GENOMIC DNA]</scope>
    <source>
        <strain>LVS</strain>
    </source>
</reference>
<proteinExistence type="inferred from homology"/>
<dbReference type="EMBL" id="AM233362">
    <property type="protein sequence ID" value="CAJ79463.1"/>
    <property type="molecule type" value="Genomic_DNA"/>
</dbReference>
<dbReference type="RefSeq" id="WP_003015897.1">
    <property type="nucleotide sequence ID" value="NZ_CP009694.1"/>
</dbReference>
<dbReference type="SMR" id="Q2A3H7"/>
<dbReference type="KEGG" id="ftl:FTL_1024"/>
<dbReference type="Proteomes" id="UP000001944">
    <property type="component" value="Chromosome"/>
</dbReference>
<dbReference type="GO" id="GO:0022627">
    <property type="term" value="C:cytosolic small ribosomal subunit"/>
    <property type="evidence" value="ECO:0007669"/>
    <property type="project" value="TreeGrafter"/>
</dbReference>
<dbReference type="GO" id="GO:0070181">
    <property type="term" value="F:small ribosomal subunit rRNA binding"/>
    <property type="evidence" value="ECO:0007669"/>
    <property type="project" value="TreeGrafter"/>
</dbReference>
<dbReference type="GO" id="GO:0003735">
    <property type="term" value="F:structural constituent of ribosome"/>
    <property type="evidence" value="ECO:0007669"/>
    <property type="project" value="InterPro"/>
</dbReference>
<dbReference type="GO" id="GO:0006412">
    <property type="term" value="P:translation"/>
    <property type="evidence" value="ECO:0007669"/>
    <property type="project" value="UniProtKB-UniRule"/>
</dbReference>
<dbReference type="CDD" id="cd00473">
    <property type="entry name" value="bS6"/>
    <property type="match status" value="1"/>
</dbReference>
<dbReference type="Gene3D" id="3.30.70.60">
    <property type="match status" value="1"/>
</dbReference>
<dbReference type="HAMAP" id="MF_00360">
    <property type="entry name" value="Ribosomal_bS6"/>
    <property type="match status" value="1"/>
</dbReference>
<dbReference type="InterPro" id="IPR000529">
    <property type="entry name" value="Ribosomal_bS6"/>
</dbReference>
<dbReference type="InterPro" id="IPR035980">
    <property type="entry name" value="Ribosomal_bS6_sf"/>
</dbReference>
<dbReference type="InterPro" id="IPR020814">
    <property type="entry name" value="Ribosomal_S6_plastid/chlpt"/>
</dbReference>
<dbReference type="InterPro" id="IPR014717">
    <property type="entry name" value="Transl_elong_EF1B/ribsomal_bS6"/>
</dbReference>
<dbReference type="NCBIfam" id="TIGR00166">
    <property type="entry name" value="S6"/>
    <property type="match status" value="1"/>
</dbReference>
<dbReference type="PANTHER" id="PTHR21011">
    <property type="entry name" value="MITOCHONDRIAL 28S RIBOSOMAL PROTEIN S6"/>
    <property type="match status" value="1"/>
</dbReference>
<dbReference type="PANTHER" id="PTHR21011:SF1">
    <property type="entry name" value="SMALL RIBOSOMAL SUBUNIT PROTEIN BS6M"/>
    <property type="match status" value="1"/>
</dbReference>
<dbReference type="Pfam" id="PF01250">
    <property type="entry name" value="Ribosomal_S6"/>
    <property type="match status" value="1"/>
</dbReference>
<dbReference type="SUPFAM" id="SSF54995">
    <property type="entry name" value="Ribosomal protein S6"/>
    <property type="match status" value="1"/>
</dbReference>
<feature type="chain" id="PRO_1000005264" description="Small ribosomal subunit protein bS6">
    <location>
        <begin position="1"/>
        <end position="111"/>
    </location>
</feature>
<gene>
    <name evidence="1" type="primary">rpsF</name>
    <name type="ordered locus">FTL_1024</name>
</gene>
<sequence length="111" mass="13054">MKHYEVVLMIHPDQSDQLDAMLGKYRGIIEEKGGKIHRFEDWGRRQLAYPIEKLHKAHYVLFNIECPTESLEKLQESLRYNDAILRRLVIATKEAITEPSVMMESNEKEVI</sequence>
<accession>Q2A3H7</accession>
<evidence type="ECO:0000255" key="1">
    <source>
        <dbReference type="HAMAP-Rule" id="MF_00360"/>
    </source>
</evidence>
<evidence type="ECO:0000305" key="2"/>
<protein>
    <recommendedName>
        <fullName evidence="1">Small ribosomal subunit protein bS6</fullName>
    </recommendedName>
    <alternativeName>
        <fullName evidence="2">30S ribosomal protein S6</fullName>
    </alternativeName>
</protein>
<keyword id="KW-1185">Reference proteome</keyword>
<keyword id="KW-0687">Ribonucleoprotein</keyword>
<keyword id="KW-0689">Ribosomal protein</keyword>
<keyword id="KW-0694">RNA-binding</keyword>
<keyword id="KW-0699">rRNA-binding</keyword>
<organism>
    <name type="scientific">Francisella tularensis subsp. holarctica (strain LVS)</name>
    <dbReference type="NCBI Taxonomy" id="376619"/>
    <lineage>
        <taxon>Bacteria</taxon>
        <taxon>Pseudomonadati</taxon>
        <taxon>Pseudomonadota</taxon>
        <taxon>Gammaproteobacteria</taxon>
        <taxon>Thiotrichales</taxon>
        <taxon>Francisellaceae</taxon>
        <taxon>Francisella</taxon>
    </lineage>
</organism>
<name>RS6_FRATH</name>